<keyword id="KW-0408">Iron</keyword>
<keyword id="KW-0479">Metal-binding</keyword>
<name>ISCA_SALDC</name>
<evidence type="ECO:0000255" key="1">
    <source>
        <dbReference type="HAMAP-Rule" id="MF_01429"/>
    </source>
</evidence>
<comment type="function">
    <text evidence="1">Is able to transfer iron-sulfur clusters to apo-ferredoxin. Multiple cycles of [2Fe2S] cluster formation and transfer are observed, suggesting that IscA acts catalytically. Recruits intracellular free iron so as to provide iron for the assembly of transient iron-sulfur cluster in IscU in the presence of IscS, L-cysteine and the thioredoxin reductase system TrxA/TrxB.</text>
</comment>
<comment type="cofactor">
    <cofactor evidence="1">
        <name>Fe cation</name>
        <dbReference type="ChEBI" id="CHEBI:24875"/>
    </cofactor>
    <text evidence="1">Binds 2 iron ions per dimer. The dimer may bind additional iron ions.</text>
</comment>
<comment type="subunit">
    <text evidence="1">Homodimer; may form tetramers and higher multimers.</text>
</comment>
<comment type="similarity">
    <text evidence="1">Belongs to the HesB/IscA family.</text>
</comment>
<sequence>MSITLSDSAAARVNTFLANRGKGFGLRLGVRTSGCSGMAYVLEFVDEPTAEDTVFEDKGVKVVVDGKSLQFLDGTQLDFVKEGLNEGFKFSNPNVKDECGCGESFHV</sequence>
<accession>B5FR83</accession>
<gene>
    <name evidence="1" type="primary">iscA</name>
    <name type="ordered locus">SeD_A2915</name>
</gene>
<feature type="chain" id="PRO_1000145760" description="Iron-binding protein IscA">
    <location>
        <begin position="1"/>
        <end position="107"/>
    </location>
</feature>
<feature type="binding site" evidence="1">
    <location>
        <position position="35"/>
    </location>
    <ligand>
        <name>Fe cation</name>
        <dbReference type="ChEBI" id="CHEBI:24875"/>
    </ligand>
</feature>
<feature type="binding site" evidence="1">
    <location>
        <position position="99"/>
    </location>
    <ligand>
        <name>Fe cation</name>
        <dbReference type="ChEBI" id="CHEBI:24875"/>
    </ligand>
</feature>
<feature type="binding site" evidence="1">
    <location>
        <position position="101"/>
    </location>
    <ligand>
        <name>Fe cation</name>
        <dbReference type="ChEBI" id="CHEBI:24875"/>
    </ligand>
</feature>
<dbReference type="EMBL" id="CP001144">
    <property type="protein sequence ID" value="ACH75737.1"/>
    <property type="molecule type" value="Genomic_DNA"/>
</dbReference>
<dbReference type="RefSeq" id="WP_000028952.1">
    <property type="nucleotide sequence ID" value="NC_011205.1"/>
</dbReference>
<dbReference type="SMR" id="B5FR83"/>
<dbReference type="GeneID" id="66756972"/>
<dbReference type="KEGG" id="sed:SeD_A2915"/>
<dbReference type="HOGENOM" id="CLU_069054_5_1_6"/>
<dbReference type="Proteomes" id="UP000008322">
    <property type="component" value="Chromosome"/>
</dbReference>
<dbReference type="GO" id="GO:0005829">
    <property type="term" value="C:cytosol"/>
    <property type="evidence" value="ECO:0007669"/>
    <property type="project" value="TreeGrafter"/>
</dbReference>
<dbReference type="GO" id="GO:0051537">
    <property type="term" value="F:2 iron, 2 sulfur cluster binding"/>
    <property type="evidence" value="ECO:0007669"/>
    <property type="project" value="TreeGrafter"/>
</dbReference>
<dbReference type="GO" id="GO:0005506">
    <property type="term" value="F:iron ion binding"/>
    <property type="evidence" value="ECO:0007669"/>
    <property type="project" value="UniProtKB-UniRule"/>
</dbReference>
<dbReference type="GO" id="GO:0016226">
    <property type="term" value="P:iron-sulfur cluster assembly"/>
    <property type="evidence" value="ECO:0007669"/>
    <property type="project" value="UniProtKB-UniRule"/>
</dbReference>
<dbReference type="FunFam" id="2.60.300.12:FF:000001">
    <property type="entry name" value="Iron-binding protein IscA"/>
    <property type="match status" value="1"/>
</dbReference>
<dbReference type="Gene3D" id="2.60.300.12">
    <property type="entry name" value="HesB-like domain"/>
    <property type="match status" value="1"/>
</dbReference>
<dbReference type="HAMAP" id="MF_01429">
    <property type="entry name" value="Fe_S_insert_IscA"/>
    <property type="match status" value="1"/>
</dbReference>
<dbReference type="InterPro" id="IPR050322">
    <property type="entry name" value="Fe-S_cluster_asmbl/transfer"/>
</dbReference>
<dbReference type="InterPro" id="IPR000361">
    <property type="entry name" value="FeS_biogenesis"/>
</dbReference>
<dbReference type="InterPro" id="IPR016092">
    <property type="entry name" value="FeS_cluster_insertion"/>
</dbReference>
<dbReference type="InterPro" id="IPR017870">
    <property type="entry name" value="FeS_cluster_insertion_CS"/>
</dbReference>
<dbReference type="InterPro" id="IPR035903">
    <property type="entry name" value="HesB-like_dom_sf"/>
</dbReference>
<dbReference type="InterPro" id="IPR011302">
    <property type="entry name" value="IscA_proteobacteria"/>
</dbReference>
<dbReference type="NCBIfam" id="TIGR00049">
    <property type="entry name" value="iron-sulfur cluster assembly accessory protein"/>
    <property type="match status" value="1"/>
</dbReference>
<dbReference type="NCBIfam" id="TIGR02011">
    <property type="entry name" value="IscA"/>
    <property type="match status" value="1"/>
</dbReference>
<dbReference type="NCBIfam" id="NF007049">
    <property type="entry name" value="PRK09502.1"/>
    <property type="match status" value="1"/>
</dbReference>
<dbReference type="PANTHER" id="PTHR10072:SF41">
    <property type="entry name" value="IRON-SULFUR CLUSTER ASSEMBLY 1 HOMOLOG, MITOCHONDRIAL"/>
    <property type="match status" value="1"/>
</dbReference>
<dbReference type="PANTHER" id="PTHR10072">
    <property type="entry name" value="IRON-SULFUR CLUSTER ASSEMBLY PROTEIN"/>
    <property type="match status" value="1"/>
</dbReference>
<dbReference type="Pfam" id="PF01521">
    <property type="entry name" value="Fe-S_biosyn"/>
    <property type="match status" value="1"/>
</dbReference>
<dbReference type="SUPFAM" id="SSF89360">
    <property type="entry name" value="HesB-like domain"/>
    <property type="match status" value="1"/>
</dbReference>
<dbReference type="PROSITE" id="PS01152">
    <property type="entry name" value="HESB"/>
    <property type="match status" value="1"/>
</dbReference>
<proteinExistence type="inferred from homology"/>
<reference key="1">
    <citation type="journal article" date="2011" name="J. Bacteriol.">
        <title>Comparative genomics of 28 Salmonella enterica isolates: evidence for CRISPR-mediated adaptive sublineage evolution.</title>
        <authorList>
            <person name="Fricke W.F."/>
            <person name="Mammel M.K."/>
            <person name="McDermott P.F."/>
            <person name="Tartera C."/>
            <person name="White D.G."/>
            <person name="Leclerc J.E."/>
            <person name="Ravel J."/>
            <person name="Cebula T.A."/>
        </authorList>
    </citation>
    <scope>NUCLEOTIDE SEQUENCE [LARGE SCALE GENOMIC DNA]</scope>
    <source>
        <strain>CT_02021853</strain>
    </source>
</reference>
<protein>
    <recommendedName>
        <fullName evidence="1">Iron-binding protein IscA</fullName>
    </recommendedName>
    <alternativeName>
        <fullName evidence="1">Iron-sulfur cluster assembly protein</fullName>
    </alternativeName>
</protein>
<organism>
    <name type="scientific">Salmonella dublin (strain CT_02021853)</name>
    <dbReference type="NCBI Taxonomy" id="439851"/>
    <lineage>
        <taxon>Bacteria</taxon>
        <taxon>Pseudomonadati</taxon>
        <taxon>Pseudomonadota</taxon>
        <taxon>Gammaproteobacteria</taxon>
        <taxon>Enterobacterales</taxon>
        <taxon>Enterobacteriaceae</taxon>
        <taxon>Salmonella</taxon>
    </lineage>
</organism>